<name>END4_STAA2</name>
<protein>
    <recommendedName>
        <fullName evidence="1">Probable endonuclease 4</fullName>
        <ecNumber evidence="1">3.1.21.2</ecNumber>
    </recommendedName>
    <alternativeName>
        <fullName evidence="1">Endodeoxyribonuclease IV</fullName>
    </alternativeName>
    <alternativeName>
        <fullName evidence="1">Endonuclease IV</fullName>
    </alternativeName>
</protein>
<feature type="chain" id="PRO_1000076809" description="Probable endonuclease 4">
    <location>
        <begin position="1"/>
        <end position="296"/>
    </location>
</feature>
<feature type="binding site" evidence="1">
    <location>
        <position position="68"/>
    </location>
    <ligand>
        <name>Zn(2+)</name>
        <dbReference type="ChEBI" id="CHEBI:29105"/>
        <label>1</label>
    </ligand>
</feature>
<feature type="binding site" evidence="1">
    <location>
        <position position="109"/>
    </location>
    <ligand>
        <name>Zn(2+)</name>
        <dbReference type="ChEBI" id="CHEBI:29105"/>
        <label>1</label>
    </ligand>
</feature>
<feature type="binding site" evidence="1">
    <location>
        <position position="144"/>
    </location>
    <ligand>
        <name>Zn(2+)</name>
        <dbReference type="ChEBI" id="CHEBI:29105"/>
        <label>1</label>
    </ligand>
</feature>
<feature type="binding site" evidence="1">
    <location>
        <position position="144"/>
    </location>
    <ligand>
        <name>Zn(2+)</name>
        <dbReference type="ChEBI" id="CHEBI:29105"/>
        <label>2</label>
    </ligand>
</feature>
<feature type="binding site" evidence="1">
    <location>
        <position position="178"/>
    </location>
    <ligand>
        <name>Zn(2+)</name>
        <dbReference type="ChEBI" id="CHEBI:29105"/>
        <label>2</label>
    </ligand>
</feature>
<feature type="binding site" evidence="1">
    <location>
        <position position="181"/>
    </location>
    <ligand>
        <name>Zn(2+)</name>
        <dbReference type="ChEBI" id="CHEBI:29105"/>
        <label>3</label>
    </ligand>
</feature>
<feature type="binding site" evidence="1">
    <location>
        <position position="213"/>
    </location>
    <ligand>
        <name>Zn(2+)</name>
        <dbReference type="ChEBI" id="CHEBI:29105"/>
        <label>2</label>
    </ligand>
</feature>
<feature type="binding site" evidence="1">
    <location>
        <position position="226"/>
    </location>
    <ligand>
        <name>Zn(2+)</name>
        <dbReference type="ChEBI" id="CHEBI:29105"/>
        <label>3</label>
    </ligand>
</feature>
<feature type="binding site" evidence="1">
    <location>
        <position position="228"/>
    </location>
    <ligand>
        <name>Zn(2+)</name>
        <dbReference type="ChEBI" id="CHEBI:29105"/>
        <label>3</label>
    </ligand>
</feature>
<feature type="binding site" evidence="1">
    <location>
        <position position="258"/>
    </location>
    <ligand>
        <name>Zn(2+)</name>
        <dbReference type="ChEBI" id="CHEBI:29105"/>
        <label>2</label>
    </ligand>
</feature>
<keyword id="KW-0227">DNA damage</keyword>
<keyword id="KW-0234">DNA repair</keyword>
<keyword id="KW-0255">Endonuclease</keyword>
<keyword id="KW-0378">Hydrolase</keyword>
<keyword id="KW-0479">Metal-binding</keyword>
<keyword id="KW-0540">Nuclease</keyword>
<keyword id="KW-0862">Zinc</keyword>
<proteinExistence type="inferred from homology"/>
<dbReference type="EC" id="3.1.21.2" evidence="1"/>
<dbReference type="EMBL" id="CP000736">
    <property type="protein sequence ID" value="ABR52497.1"/>
    <property type="molecule type" value="Genomic_DNA"/>
</dbReference>
<dbReference type="SMR" id="A6U229"/>
<dbReference type="KEGG" id="sah:SaurJH1_1649"/>
<dbReference type="HOGENOM" id="CLU_025885_4_1_9"/>
<dbReference type="GO" id="GO:0008833">
    <property type="term" value="F:deoxyribonuclease IV (phage-T4-induced) activity"/>
    <property type="evidence" value="ECO:0007669"/>
    <property type="project" value="UniProtKB-UniRule"/>
</dbReference>
<dbReference type="GO" id="GO:0003677">
    <property type="term" value="F:DNA binding"/>
    <property type="evidence" value="ECO:0007669"/>
    <property type="project" value="InterPro"/>
</dbReference>
<dbReference type="GO" id="GO:0003906">
    <property type="term" value="F:DNA-(apurinic or apyrimidinic site) endonuclease activity"/>
    <property type="evidence" value="ECO:0007669"/>
    <property type="project" value="TreeGrafter"/>
</dbReference>
<dbReference type="GO" id="GO:0008081">
    <property type="term" value="F:phosphoric diester hydrolase activity"/>
    <property type="evidence" value="ECO:0007669"/>
    <property type="project" value="TreeGrafter"/>
</dbReference>
<dbReference type="GO" id="GO:0008270">
    <property type="term" value="F:zinc ion binding"/>
    <property type="evidence" value="ECO:0007669"/>
    <property type="project" value="UniProtKB-UniRule"/>
</dbReference>
<dbReference type="GO" id="GO:0006284">
    <property type="term" value="P:base-excision repair"/>
    <property type="evidence" value="ECO:0007669"/>
    <property type="project" value="TreeGrafter"/>
</dbReference>
<dbReference type="CDD" id="cd00019">
    <property type="entry name" value="AP2Ec"/>
    <property type="match status" value="1"/>
</dbReference>
<dbReference type="FunFam" id="3.20.20.150:FF:000001">
    <property type="entry name" value="Probable endonuclease 4"/>
    <property type="match status" value="1"/>
</dbReference>
<dbReference type="Gene3D" id="3.20.20.150">
    <property type="entry name" value="Divalent-metal-dependent TIM barrel enzymes"/>
    <property type="match status" value="1"/>
</dbReference>
<dbReference type="HAMAP" id="MF_00152">
    <property type="entry name" value="Nfo"/>
    <property type="match status" value="1"/>
</dbReference>
<dbReference type="InterPro" id="IPR001719">
    <property type="entry name" value="AP_endonuc_2"/>
</dbReference>
<dbReference type="InterPro" id="IPR018246">
    <property type="entry name" value="AP_endonuc_F2_Zn_BS"/>
</dbReference>
<dbReference type="InterPro" id="IPR036237">
    <property type="entry name" value="Xyl_isomerase-like_sf"/>
</dbReference>
<dbReference type="InterPro" id="IPR013022">
    <property type="entry name" value="Xyl_isomerase-like_TIM-brl"/>
</dbReference>
<dbReference type="NCBIfam" id="TIGR00587">
    <property type="entry name" value="nfo"/>
    <property type="match status" value="1"/>
</dbReference>
<dbReference type="NCBIfam" id="NF002196">
    <property type="entry name" value="PRK01060.1-1"/>
    <property type="match status" value="1"/>
</dbReference>
<dbReference type="PANTHER" id="PTHR21445:SF0">
    <property type="entry name" value="APURINIC-APYRIMIDINIC ENDONUCLEASE"/>
    <property type="match status" value="1"/>
</dbReference>
<dbReference type="PANTHER" id="PTHR21445">
    <property type="entry name" value="ENDONUCLEASE IV ENDODEOXYRIBONUCLEASE IV"/>
    <property type="match status" value="1"/>
</dbReference>
<dbReference type="Pfam" id="PF01261">
    <property type="entry name" value="AP_endonuc_2"/>
    <property type="match status" value="1"/>
</dbReference>
<dbReference type="SMART" id="SM00518">
    <property type="entry name" value="AP2Ec"/>
    <property type="match status" value="1"/>
</dbReference>
<dbReference type="SUPFAM" id="SSF51658">
    <property type="entry name" value="Xylose isomerase-like"/>
    <property type="match status" value="1"/>
</dbReference>
<dbReference type="PROSITE" id="PS00729">
    <property type="entry name" value="AP_NUCLEASE_F2_1"/>
    <property type="match status" value="1"/>
</dbReference>
<dbReference type="PROSITE" id="PS00730">
    <property type="entry name" value="AP_NUCLEASE_F2_2"/>
    <property type="match status" value="1"/>
</dbReference>
<dbReference type="PROSITE" id="PS00731">
    <property type="entry name" value="AP_NUCLEASE_F2_3"/>
    <property type="match status" value="1"/>
</dbReference>
<dbReference type="PROSITE" id="PS51432">
    <property type="entry name" value="AP_NUCLEASE_F2_4"/>
    <property type="match status" value="1"/>
</dbReference>
<organism>
    <name type="scientific">Staphylococcus aureus (strain JH1)</name>
    <dbReference type="NCBI Taxonomy" id="359787"/>
    <lineage>
        <taxon>Bacteria</taxon>
        <taxon>Bacillati</taxon>
        <taxon>Bacillota</taxon>
        <taxon>Bacilli</taxon>
        <taxon>Bacillales</taxon>
        <taxon>Staphylococcaceae</taxon>
        <taxon>Staphylococcus</taxon>
    </lineage>
</organism>
<comment type="function">
    <text evidence="1">Endonuclease IV plays a role in DNA repair. It cleaves phosphodiester bonds at apurinic or apyrimidinic (AP) sites, generating a 3'-hydroxyl group and a 5'-terminal sugar phosphate.</text>
</comment>
<comment type="catalytic activity">
    <reaction evidence="1">
        <text>Endonucleolytic cleavage to 5'-phosphooligonucleotide end-products.</text>
        <dbReference type="EC" id="3.1.21.2"/>
    </reaction>
</comment>
<comment type="cofactor">
    <cofactor evidence="1">
        <name>Zn(2+)</name>
        <dbReference type="ChEBI" id="CHEBI:29105"/>
    </cofactor>
    <text evidence="1">Binds 3 Zn(2+) ions.</text>
</comment>
<comment type="similarity">
    <text evidence="1">Belongs to the AP endonuclease 2 family.</text>
</comment>
<accession>A6U229</accession>
<reference key="1">
    <citation type="submission" date="2007-06" db="EMBL/GenBank/DDBJ databases">
        <title>Complete sequence of chromosome of Staphylococcus aureus subsp. aureus JH1.</title>
        <authorList>
            <consortium name="US DOE Joint Genome Institute"/>
            <person name="Copeland A."/>
            <person name="Lucas S."/>
            <person name="Lapidus A."/>
            <person name="Barry K."/>
            <person name="Detter J.C."/>
            <person name="Glavina del Rio T."/>
            <person name="Hammon N."/>
            <person name="Israni S."/>
            <person name="Dalin E."/>
            <person name="Tice H."/>
            <person name="Pitluck S."/>
            <person name="Chain P."/>
            <person name="Malfatti S."/>
            <person name="Shin M."/>
            <person name="Vergez L."/>
            <person name="Schmutz J."/>
            <person name="Larimer F."/>
            <person name="Land M."/>
            <person name="Hauser L."/>
            <person name="Kyrpides N."/>
            <person name="Ivanova N."/>
            <person name="Tomasz A."/>
            <person name="Richardson P."/>
        </authorList>
    </citation>
    <scope>NUCLEOTIDE SEQUENCE [LARGE SCALE GENOMIC DNA]</scope>
    <source>
        <strain>JH1</strain>
    </source>
</reference>
<evidence type="ECO:0000255" key="1">
    <source>
        <dbReference type="HAMAP-Rule" id="MF_00152"/>
    </source>
</evidence>
<sequence>MLLGSHVSMSGKKMLEGSAIEAYEYGETTFMIYTGAPQNTRRKSIEDLNITKGHEVMEKYGLSNIVVHAPYIINIANTTKPETFNLGVDFLQQEIERTQAIGAKDIVLHPGAHVGAGVDAGINKIIEGLNEVLTNDNNVRIALETMAGKGTEIGRSFEELARIIDGVHNNERLSVCFDTCHTHDAGYNVKEDFDGVLNEFDKIIGVDRIKVVHVNDSKNDRGAQKDRHENIGFGYIGFDALNYIVHHDSFKDIPKILETPYVGEDKKNKKPPYKLEIEMLKQQQFDPELKNKVMQQ</sequence>
<gene>
    <name evidence="1" type="primary">nfo</name>
    <name type="ordered locus">SaurJH1_1649</name>
</gene>